<feature type="chain" id="PRO_0000225285" description="DNA-directed RNA polymerase subunit alpha">
    <location>
        <begin position="1"/>
        <end position="332"/>
    </location>
</feature>
<feature type="region of interest" description="Alpha N-terminal domain (alpha-NTD)" evidence="1">
    <location>
        <begin position="1"/>
        <end position="232"/>
    </location>
</feature>
<feature type="region of interest" description="Alpha C-terminal domain (alpha-CTD)" evidence="1">
    <location>
        <begin position="246"/>
        <end position="332"/>
    </location>
</feature>
<evidence type="ECO:0000255" key="1">
    <source>
        <dbReference type="HAMAP-Rule" id="MF_00059"/>
    </source>
</evidence>
<accession>Q3J8T8</accession>
<reference key="1">
    <citation type="journal article" date="2006" name="Appl. Environ. Microbiol.">
        <title>Complete genome sequence of the marine, chemolithoautotrophic, ammonia-oxidizing bacterium Nitrosococcus oceani ATCC 19707.</title>
        <authorList>
            <person name="Klotz M.G."/>
            <person name="Arp D.J."/>
            <person name="Chain P.S.G."/>
            <person name="El-Sheikh A.F."/>
            <person name="Hauser L.J."/>
            <person name="Hommes N.G."/>
            <person name="Larimer F.W."/>
            <person name="Malfatti S.A."/>
            <person name="Norton J.M."/>
            <person name="Poret-Peterson A.T."/>
            <person name="Vergez L.M."/>
            <person name="Ward B.B."/>
        </authorList>
    </citation>
    <scope>NUCLEOTIDE SEQUENCE [LARGE SCALE GENOMIC DNA]</scope>
    <source>
        <strain>ATCC 19707 / BCRC 17464 / JCM 30415 / NCIMB 11848 / C-107</strain>
    </source>
</reference>
<name>RPOA_NITOC</name>
<gene>
    <name evidence="1" type="primary">rpoA</name>
    <name type="ordered locus">Noc_2300</name>
</gene>
<dbReference type="EC" id="2.7.7.6" evidence="1"/>
<dbReference type="EMBL" id="CP000127">
    <property type="protein sequence ID" value="ABA58758.1"/>
    <property type="molecule type" value="Genomic_DNA"/>
</dbReference>
<dbReference type="RefSeq" id="WP_002811670.1">
    <property type="nucleotide sequence ID" value="NC_007484.1"/>
</dbReference>
<dbReference type="SMR" id="Q3J8T8"/>
<dbReference type="FunCoup" id="Q3J8T8">
    <property type="interactions" value="526"/>
</dbReference>
<dbReference type="STRING" id="323261.Noc_2300"/>
<dbReference type="KEGG" id="noc:Noc_2300"/>
<dbReference type="eggNOG" id="COG0202">
    <property type="taxonomic scope" value="Bacteria"/>
</dbReference>
<dbReference type="HOGENOM" id="CLU_053084_0_1_6"/>
<dbReference type="InParanoid" id="Q3J8T8"/>
<dbReference type="Proteomes" id="UP000006838">
    <property type="component" value="Chromosome"/>
</dbReference>
<dbReference type="GO" id="GO:0005737">
    <property type="term" value="C:cytoplasm"/>
    <property type="evidence" value="ECO:0007669"/>
    <property type="project" value="UniProtKB-ARBA"/>
</dbReference>
<dbReference type="GO" id="GO:0000428">
    <property type="term" value="C:DNA-directed RNA polymerase complex"/>
    <property type="evidence" value="ECO:0007669"/>
    <property type="project" value="UniProtKB-KW"/>
</dbReference>
<dbReference type="GO" id="GO:0003677">
    <property type="term" value="F:DNA binding"/>
    <property type="evidence" value="ECO:0007669"/>
    <property type="project" value="UniProtKB-UniRule"/>
</dbReference>
<dbReference type="GO" id="GO:0003899">
    <property type="term" value="F:DNA-directed RNA polymerase activity"/>
    <property type="evidence" value="ECO:0007669"/>
    <property type="project" value="UniProtKB-UniRule"/>
</dbReference>
<dbReference type="GO" id="GO:0046983">
    <property type="term" value="F:protein dimerization activity"/>
    <property type="evidence" value="ECO:0007669"/>
    <property type="project" value="InterPro"/>
</dbReference>
<dbReference type="GO" id="GO:0006351">
    <property type="term" value="P:DNA-templated transcription"/>
    <property type="evidence" value="ECO:0007669"/>
    <property type="project" value="UniProtKB-UniRule"/>
</dbReference>
<dbReference type="CDD" id="cd06928">
    <property type="entry name" value="RNAP_alpha_NTD"/>
    <property type="match status" value="1"/>
</dbReference>
<dbReference type="FunFam" id="1.10.150.20:FF:000001">
    <property type="entry name" value="DNA-directed RNA polymerase subunit alpha"/>
    <property type="match status" value="1"/>
</dbReference>
<dbReference type="FunFam" id="2.170.120.12:FF:000001">
    <property type="entry name" value="DNA-directed RNA polymerase subunit alpha"/>
    <property type="match status" value="1"/>
</dbReference>
<dbReference type="Gene3D" id="1.10.150.20">
    <property type="entry name" value="5' to 3' exonuclease, C-terminal subdomain"/>
    <property type="match status" value="1"/>
</dbReference>
<dbReference type="Gene3D" id="2.170.120.12">
    <property type="entry name" value="DNA-directed RNA polymerase, insert domain"/>
    <property type="match status" value="1"/>
</dbReference>
<dbReference type="Gene3D" id="3.30.1360.10">
    <property type="entry name" value="RNA polymerase, RBP11-like subunit"/>
    <property type="match status" value="1"/>
</dbReference>
<dbReference type="HAMAP" id="MF_00059">
    <property type="entry name" value="RNApol_bact_RpoA"/>
    <property type="match status" value="1"/>
</dbReference>
<dbReference type="InterPro" id="IPR011262">
    <property type="entry name" value="DNA-dir_RNA_pol_insert"/>
</dbReference>
<dbReference type="InterPro" id="IPR011263">
    <property type="entry name" value="DNA-dir_RNA_pol_RpoA/D/Rpb3"/>
</dbReference>
<dbReference type="InterPro" id="IPR011773">
    <property type="entry name" value="DNA-dir_RpoA"/>
</dbReference>
<dbReference type="InterPro" id="IPR036603">
    <property type="entry name" value="RBP11-like"/>
</dbReference>
<dbReference type="InterPro" id="IPR011260">
    <property type="entry name" value="RNAP_asu_C"/>
</dbReference>
<dbReference type="InterPro" id="IPR036643">
    <property type="entry name" value="RNApol_insert_sf"/>
</dbReference>
<dbReference type="NCBIfam" id="NF003513">
    <property type="entry name" value="PRK05182.1-2"/>
    <property type="match status" value="1"/>
</dbReference>
<dbReference type="NCBIfam" id="NF003519">
    <property type="entry name" value="PRK05182.2-5"/>
    <property type="match status" value="1"/>
</dbReference>
<dbReference type="NCBIfam" id="TIGR02027">
    <property type="entry name" value="rpoA"/>
    <property type="match status" value="1"/>
</dbReference>
<dbReference type="Pfam" id="PF01000">
    <property type="entry name" value="RNA_pol_A_bac"/>
    <property type="match status" value="1"/>
</dbReference>
<dbReference type="Pfam" id="PF03118">
    <property type="entry name" value="RNA_pol_A_CTD"/>
    <property type="match status" value="1"/>
</dbReference>
<dbReference type="Pfam" id="PF01193">
    <property type="entry name" value="RNA_pol_L"/>
    <property type="match status" value="1"/>
</dbReference>
<dbReference type="SMART" id="SM00662">
    <property type="entry name" value="RPOLD"/>
    <property type="match status" value="1"/>
</dbReference>
<dbReference type="SUPFAM" id="SSF47789">
    <property type="entry name" value="C-terminal domain of RNA polymerase alpha subunit"/>
    <property type="match status" value="1"/>
</dbReference>
<dbReference type="SUPFAM" id="SSF56553">
    <property type="entry name" value="Insert subdomain of RNA polymerase alpha subunit"/>
    <property type="match status" value="1"/>
</dbReference>
<dbReference type="SUPFAM" id="SSF55257">
    <property type="entry name" value="RBP11-like subunits of RNA polymerase"/>
    <property type="match status" value="1"/>
</dbReference>
<proteinExistence type="inferred from homology"/>
<organism>
    <name type="scientific">Nitrosococcus oceani (strain ATCC 19707 / BCRC 17464 / JCM 30415 / NCIMB 11848 / C-107)</name>
    <dbReference type="NCBI Taxonomy" id="323261"/>
    <lineage>
        <taxon>Bacteria</taxon>
        <taxon>Pseudomonadati</taxon>
        <taxon>Pseudomonadota</taxon>
        <taxon>Gammaproteobacteria</taxon>
        <taxon>Chromatiales</taxon>
        <taxon>Chromatiaceae</taxon>
        <taxon>Nitrosococcus</taxon>
    </lineage>
</organism>
<keyword id="KW-0240">DNA-directed RNA polymerase</keyword>
<keyword id="KW-0548">Nucleotidyltransferase</keyword>
<keyword id="KW-1185">Reference proteome</keyword>
<keyword id="KW-0804">Transcription</keyword>
<keyword id="KW-0808">Transferase</keyword>
<comment type="function">
    <text evidence="1">DNA-dependent RNA polymerase catalyzes the transcription of DNA into RNA using the four ribonucleoside triphosphates as substrates.</text>
</comment>
<comment type="catalytic activity">
    <reaction evidence="1">
        <text>RNA(n) + a ribonucleoside 5'-triphosphate = RNA(n+1) + diphosphate</text>
        <dbReference type="Rhea" id="RHEA:21248"/>
        <dbReference type="Rhea" id="RHEA-COMP:14527"/>
        <dbReference type="Rhea" id="RHEA-COMP:17342"/>
        <dbReference type="ChEBI" id="CHEBI:33019"/>
        <dbReference type="ChEBI" id="CHEBI:61557"/>
        <dbReference type="ChEBI" id="CHEBI:140395"/>
        <dbReference type="EC" id="2.7.7.6"/>
    </reaction>
</comment>
<comment type="subunit">
    <text evidence="1">Homodimer. The RNAP catalytic core consists of 2 alpha, 1 beta, 1 beta' and 1 omega subunit. When a sigma factor is associated with the core the holoenzyme is formed, which can initiate transcription.</text>
</comment>
<comment type="domain">
    <text evidence="1">The N-terminal domain is essential for RNAP assembly and basal transcription, whereas the C-terminal domain is involved in interaction with transcriptional regulators and with upstream promoter elements.</text>
</comment>
<comment type="similarity">
    <text evidence="1">Belongs to the RNA polymerase alpha chain family.</text>
</comment>
<sequence length="332" mass="36885">MQVSNFLKPRIVDVQRINDYATKVTLEPLERGFGHTLGNALRRILLSSMPGCAIIEAQIDGVLHEYTTKEGVQEDMTEILLNLKGVAVKLHGRDEVTLNLSSKGPVTVTAGDIQLEHDVEVINPEHVIAHLTKSGELNLTMKVVRGRGYQSASMRIPKEEDERSIGHLILDASFSPIRRVTYEVDSARVEQRTDLDKLIIEIETNGTIAPDEAVRKAATILQDQLTAFVELEGKIETAKEKKAAEIDPVLLQPIDDLELTVRSANCLKAENIYYIGDLIQKTEVELLKTPNLGKKSLTEIKDVLTLRGLSLGMRLENWPPAGLREEETKVTA</sequence>
<protein>
    <recommendedName>
        <fullName evidence="1">DNA-directed RNA polymerase subunit alpha</fullName>
        <shortName evidence="1">RNAP subunit alpha</shortName>
        <ecNumber evidence="1">2.7.7.6</ecNumber>
    </recommendedName>
    <alternativeName>
        <fullName evidence="1">RNA polymerase subunit alpha</fullName>
    </alternativeName>
    <alternativeName>
        <fullName evidence="1">Transcriptase subunit alpha</fullName>
    </alternativeName>
</protein>